<accession>Q60954</accession>
<accession>B1ARH5</accession>
<accession>Q5SVC8</accession>
<accession>Q60955</accession>
<accession>Q8CIL0</accession>
<protein>
    <recommendedName>
        <fullName>Homeobox protein Meis1</fullName>
    </recommendedName>
    <alternativeName>
        <fullName>Myeloid ecotropic viral integration site 1</fullName>
    </alternativeName>
</protein>
<gene>
    <name type="primary">Meis1</name>
</gene>
<evidence type="ECO:0000250" key="1">
    <source>
        <dbReference type="UniProtKB" id="O00470"/>
    </source>
</evidence>
<evidence type="ECO:0000255" key="2"/>
<evidence type="ECO:0000255" key="3">
    <source>
        <dbReference type="PROSITE-ProRule" id="PRU00108"/>
    </source>
</evidence>
<evidence type="ECO:0000256" key="4">
    <source>
        <dbReference type="SAM" id="MobiDB-lite"/>
    </source>
</evidence>
<evidence type="ECO:0000269" key="5">
    <source>
    </source>
</evidence>
<evidence type="ECO:0000269" key="6">
    <source>
    </source>
</evidence>
<evidence type="ECO:0000269" key="7">
    <source>
    </source>
</evidence>
<evidence type="ECO:0000269" key="8">
    <source>
    </source>
</evidence>
<evidence type="ECO:0000269" key="9">
    <source>
    </source>
</evidence>
<evidence type="ECO:0000269" key="10">
    <source>
    </source>
</evidence>
<evidence type="ECO:0000269" key="11">
    <source>
    </source>
</evidence>
<evidence type="ECO:0000269" key="12">
    <source>
    </source>
</evidence>
<evidence type="ECO:0000303" key="13">
    <source>
    </source>
</evidence>
<evidence type="ECO:0000303" key="14">
    <source>
    </source>
</evidence>
<evidence type="ECO:0000303" key="15">
    <source>
    </source>
</evidence>
<evidence type="ECO:0000305" key="16"/>
<evidence type="ECO:0007829" key="17">
    <source>
        <dbReference type="PDB" id="8VTS"/>
    </source>
</evidence>
<proteinExistence type="evidence at protein level"/>
<organism>
    <name type="scientific">Mus musculus</name>
    <name type="common">Mouse</name>
    <dbReference type="NCBI Taxonomy" id="10090"/>
    <lineage>
        <taxon>Eukaryota</taxon>
        <taxon>Metazoa</taxon>
        <taxon>Chordata</taxon>
        <taxon>Craniata</taxon>
        <taxon>Vertebrata</taxon>
        <taxon>Euteleostomi</taxon>
        <taxon>Mammalia</taxon>
        <taxon>Eutheria</taxon>
        <taxon>Euarchontoglires</taxon>
        <taxon>Glires</taxon>
        <taxon>Rodentia</taxon>
        <taxon>Myomorpha</taxon>
        <taxon>Muroidea</taxon>
        <taxon>Muridae</taxon>
        <taxon>Murinae</taxon>
        <taxon>Mus</taxon>
        <taxon>Mus</taxon>
    </lineage>
</organism>
<comment type="function">
    <text evidence="7 8">Acts as a transcriptional regulator of PAX6. Also acts as a transcriptional activator of PF4 in complex with PBX1 or PBX2. Required for hematopoiesis, megakaryocyte lineage development and vascular patterning. May function as a cofactor for HOXA7 and HOXA9 in the induction of myeloid leukemias.</text>
</comment>
<comment type="subunit">
    <text evidence="1 5 6 11 12">Interacts with the N-terminal region of PBX1 to form a heterodimer which binds DNA including a cAMP-responsive sequence in CYP17. Also forms heterodimers with PBX2. Forms heterotrimers with PBX1 or PBX2 and a number of HOX proteins including HOXA9, HOXD4 and HOXD9 where it acts as a non-DNA-binding partner. Also forms heterotrimers with PBX1 and HOX proteins including HOXD9 and HOXD10 where PBX1 is the non-DNA-binding partner. Heterodimer with DLX3. Heterodimer with HOXB13 (By similarity).</text>
</comment>
<comment type="interaction">
    <interactant intactId="EBI-445723">
        <id>Q60954-2</id>
    </interactant>
    <interactant intactId="EBI-925160">
        <id>Q62424</id>
        <label>Hoxa13</label>
    </interactant>
    <organismsDiffer>false</organismsDiffer>
    <experiments>3</experiments>
</comment>
<comment type="subcellular location">
    <subcellularLocation>
        <location evidence="3 5 8">Nucleus</location>
    </subcellularLocation>
</comment>
<comment type="alternative products">
    <event type="alternative splicing"/>
    <isoform>
        <id>Q60954-1</id>
        <name>1</name>
        <name>Meis1A</name>
        <sequence type="displayed"/>
    </isoform>
    <isoform>
        <id>Q60954-2</id>
        <name>2</name>
        <name>Meis1B</name>
        <sequence type="described" ref="VSP_002240"/>
    </isoform>
    <isoform>
        <id>Q60954-3</id>
        <name>3</name>
        <sequence type="described" ref="VSP_017056"/>
    </isoform>
</comment>
<comment type="tissue specificity">
    <text evidence="9">Expressed at high levels in the lung with lower levels detected in the heart and brain. Expressed in pancreatic islets (beta-cells and non-beta-cells) (PubMed:21059917).</text>
</comment>
<comment type="developmental stage">
    <text>Expressed at high levels in all stages of embryonic development analyzed (7 days to 17 days).</text>
</comment>
<comment type="induction">
    <text>Expression is coactivated by retroviral integration in BXH-2 murine myeloid leukemias.</text>
</comment>
<comment type="disease">
    <text evidence="10">Meis1 serves as a site of viral integration in 15% of the tumors arising in BXH-2 mice that develop myeloid leukemia as a result of the expression of an ecotropic murine leukemia virus.</text>
</comment>
<comment type="disruption phenotype">
    <text evidence="8">Mice die between embryonic days 11.5 and 14.5, showing internal hemorrhage, liver hypoplasia and anemia.</text>
</comment>
<comment type="similarity">
    <text evidence="16">Belongs to the TALE/MEIS homeobox family.</text>
</comment>
<name>MEIS1_MOUSE</name>
<reference key="1">
    <citation type="journal article" date="1995" name="Mol. Cell. Biol.">
        <title>Meis1, a PBX1-related homeobox gene involved in myeloid leukemia in BXH-2 mice.</title>
        <authorList>
            <person name="Moskow J.J."/>
            <person name="Bullrich F."/>
            <person name="Huebner K."/>
            <person name="Daar I.O."/>
            <person name="Buchberg A.M."/>
        </authorList>
    </citation>
    <scope>NUCLEOTIDE SEQUENCE [MRNA] (ISOFORMS 1 AND 2)</scope>
</reference>
<reference key="2">
    <citation type="journal article" date="2005" name="Science">
        <title>The transcriptional landscape of the mammalian genome.</title>
        <authorList>
            <person name="Carninci P."/>
            <person name="Kasukawa T."/>
            <person name="Katayama S."/>
            <person name="Gough J."/>
            <person name="Frith M.C."/>
            <person name="Maeda N."/>
            <person name="Oyama R."/>
            <person name="Ravasi T."/>
            <person name="Lenhard B."/>
            <person name="Wells C."/>
            <person name="Kodzius R."/>
            <person name="Shimokawa K."/>
            <person name="Bajic V.B."/>
            <person name="Brenner S.E."/>
            <person name="Batalov S."/>
            <person name="Forrest A.R."/>
            <person name="Zavolan M."/>
            <person name="Davis M.J."/>
            <person name="Wilming L.G."/>
            <person name="Aidinis V."/>
            <person name="Allen J.E."/>
            <person name="Ambesi-Impiombato A."/>
            <person name="Apweiler R."/>
            <person name="Aturaliya R.N."/>
            <person name="Bailey T.L."/>
            <person name="Bansal M."/>
            <person name="Baxter L."/>
            <person name="Beisel K.W."/>
            <person name="Bersano T."/>
            <person name="Bono H."/>
            <person name="Chalk A.M."/>
            <person name="Chiu K.P."/>
            <person name="Choudhary V."/>
            <person name="Christoffels A."/>
            <person name="Clutterbuck D.R."/>
            <person name="Crowe M.L."/>
            <person name="Dalla E."/>
            <person name="Dalrymple B.P."/>
            <person name="de Bono B."/>
            <person name="Della Gatta G."/>
            <person name="di Bernardo D."/>
            <person name="Down T."/>
            <person name="Engstrom P."/>
            <person name="Fagiolini M."/>
            <person name="Faulkner G."/>
            <person name="Fletcher C.F."/>
            <person name="Fukushima T."/>
            <person name="Furuno M."/>
            <person name="Futaki S."/>
            <person name="Gariboldi M."/>
            <person name="Georgii-Hemming P."/>
            <person name="Gingeras T.R."/>
            <person name="Gojobori T."/>
            <person name="Green R.E."/>
            <person name="Gustincich S."/>
            <person name="Harbers M."/>
            <person name="Hayashi Y."/>
            <person name="Hensch T.K."/>
            <person name="Hirokawa N."/>
            <person name="Hill D."/>
            <person name="Huminiecki L."/>
            <person name="Iacono M."/>
            <person name="Ikeo K."/>
            <person name="Iwama A."/>
            <person name="Ishikawa T."/>
            <person name="Jakt M."/>
            <person name="Kanapin A."/>
            <person name="Katoh M."/>
            <person name="Kawasawa Y."/>
            <person name="Kelso J."/>
            <person name="Kitamura H."/>
            <person name="Kitano H."/>
            <person name="Kollias G."/>
            <person name="Krishnan S.P."/>
            <person name="Kruger A."/>
            <person name="Kummerfeld S.K."/>
            <person name="Kurochkin I.V."/>
            <person name="Lareau L.F."/>
            <person name="Lazarevic D."/>
            <person name="Lipovich L."/>
            <person name="Liu J."/>
            <person name="Liuni S."/>
            <person name="McWilliam S."/>
            <person name="Madan Babu M."/>
            <person name="Madera M."/>
            <person name="Marchionni L."/>
            <person name="Matsuda H."/>
            <person name="Matsuzawa S."/>
            <person name="Miki H."/>
            <person name="Mignone F."/>
            <person name="Miyake S."/>
            <person name="Morris K."/>
            <person name="Mottagui-Tabar S."/>
            <person name="Mulder N."/>
            <person name="Nakano N."/>
            <person name="Nakauchi H."/>
            <person name="Ng P."/>
            <person name="Nilsson R."/>
            <person name="Nishiguchi S."/>
            <person name="Nishikawa S."/>
            <person name="Nori F."/>
            <person name="Ohara O."/>
            <person name="Okazaki Y."/>
            <person name="Orlando V."/>
            <person name="Pang K.C."/>
            <person name="Pavan W.J."/>
            <person name="Pavesi G."/>
            <person name="Pesole G."/>
            <person name="Petrovsky N."/>
            <person name="Piazza S."/>
            <person name="Reed J."/>
            <person name="Reid J.F."/>
            <person name="Ring B.Z."/>
            <person name="Ringwald M."/>
            <person name="Rost B."/>
            <person name="Ruan Y."/>
            <person name="Salzberg S.L."/>
            <person name="Sandelin A."/>
            <person name="Schneider C."/>
            <person name="Schoenbach C."/>
            <person name="Sekiguchi K."/>
            <person name="Semple C.A."/>
            <person name="Seno S."/>
            <person name="Sessa L."/>
            <person name="Sheng Y."/>
            <person name="Shibata Y."/>
            <person name="Shimada H."/>
            <person name="Shimada K."/>
            <person name="Silva D."/>
            <person name="Sinclair B."/>
            <person name="Sperling S."/>
            <person name="Stupka E."/>
            <person name="Sugiura K."/>
            <person name="Sultana R."/>
            <person name="Takenaka Y."/>
            <person name="Taki K."/>
            <person name="Tammoja K."/>
            <person name="Tan S.L."/>
            <person name="Tang S."/>
            <person name="Taylor M.S."/>
            <person name="Tegner J."/>
            <person name="Teichmann S.A."/>
            <person name="Ueda H.R."/>
            <person name="van Nimwegen E."/>
            <person name="Verardo R."/>
            <person name="Wei C.L."/>
            <person name="Yagi K."/>
            <person name="Yamanishi H."/>
            <person name="Zabarovsky E."/>
            <person name="Zhu S."/>
            <person name="Zimmer A."/>
            <person name="Hide W."/>
            <person name="Bult C."/>
            <person name="Grimmond S.M."/>
            <person name="Teasdale R.D."/>
            <person name="Liu E.T."/>
            <person name="Brusic V."/>
            <person name="Quackenbush J."/>
            <person name="Wahlestedt C."/>
            <person name="Mattick J.S."/>
            <person name="Hume D.A."/>
            <person name="Kai C."/>
            <person name="Sasaki D."/>
            <person name="Tomaru Y."/>
            <person name="Fukuda S."/>
            <person name="Kanamori-Katayama M."/>
            <person name="Suzuki M."/>
            <person name="Aoki J."/>
            <person name="Arakawa T."/>
            <person name="Iida J."/>
            <person name="Imamura K."/>
            <person name="Itoh M."/>
            <person name="Kato T."/>
            <person name="Kawaji H."/>
            <person name="Kawagashira N."/>
            <person name="Kawashima T."/>
            <person name="Kojima M."/>
            <person name="Kondo S."/>
            <person name="Konno H."/>
            <person name="Nakano K."/>
            <person name="Ninomiya N."/>
            <person name="Nishio T."/>
            <person name="Okada M."/>
            <person name="Plessy C."/>
            <person name="Shibata K."/>
            <person name="Shiraki T."/>
            <person name="Suzuki S."/>
            <person name="Tagami M."/>
            <person name="Waki K."/>
            <person name="Watahiki A."/>
            <person name="Okamura-Oho Y."/>
            <person name="Suzuki H."/>
            <person name="Kawai J."/>
            <person name="Hayashizaki Y."/>
        </authorList>
    </citation>
    <scope>NUCLEOTIDE SEQUENCE [LARGE SCALE MRNA] (ISOFORMS 1 AND 3)</scope>
    <source>
        <strain>C57BL/6J</strain>
        <tissue>Embryo</tissue>
        <tissue>Head</tissue>
    </source>
</reference>
<reference key="3">
    <citation type="journal article" date="2009" name="PLoS Biol.">
        <title>Lineage-specific biology revealed by a finished genome assembly of the mouse.</title>
        <authorList>
            <person name="Church D.M."/>
            <person name="Goodstadt L."/>
            <person name="Hillier L.W."/>
            <person name="Zody M.C."/>
            <person name="Goldstein S."/>
            <person name="She X."/>
            <person name="Bult C.J."/>
            <person name="Agarwala R."/>
            <person name="Cherry J.L."/>
            <person name="DiCuccio M."/>
            <person name="Hlavina W."/>
            <person name="Kapustin Y."/>
            <person name="Meric P."/>
            <person name="Maglott D."/>
            <person name="Birtle Z."/>
            <person name="Marques A.C."/>
            <person name="Graves T."/>
            <person name="Zhou S."/>
            <person name="Teague B."/>
            <person name="Potamousis K."/>
            <person name="Churas C."/>
            <person name="Place M."/>
            <person name="Herschleb J."/>
            <person name="Runnheim R."/>
            <person name="Forrest D."/>
            <person name="Amos-Landgraf J."/>
            <person name="Schwartz D.C."/>
            <person name="Cheng Z."/>
            <person name="Lindblad-Toh K."/>
            <person name="Eichler E.E."/>
            <person name="Ponting C.P."/>
        </authorList>
    </citation>
    <scope>NUCLEOTIDE SEQUENCE [LARGE SCALE GENOMIC DNA]</scope>
    <source>
        <strain>C57BL/6J</strain>
    </source>
</reference>
<reference key="4">
    <citation type="journal article" date="2004" name="Genome Res.">
        <title>The status, quality, and expansion of the NIH full-length cDNA project: the Mammalian Gene Collection (MGC).</title>
        <authorList>
            <consortium name="The MGC Project Team"/>
        </authorList>
    </citation>
    <scope>NUCLEOTIDE SEQUENCE [LARGE SCALE MRNA] (ISOFORM 3)</scope>
    <source>
        <strain>FVB/N</strain>
        <tissue>Mammary gland</tissue>
    </source>
</reference>
<reference key="5">
    <citation type="journal article" date="1997" name="Mol. Cell. Biol.">
        <title>Meis proteins are major in vivo DNA binding partners for wild-type but not chimeric Pbx proteins.</title>
        <authorList>
            <person name="Chang C.-P."/>
            <person name="Jacobs Y."/>
            <person name="Nakamura T."/>
            <person name="Jenkins N.A."/>
            <person name="Copeland N.G."/>
            <person name="Cleary M.L."/>
        </authorList>
    </citation>
    <scope>INTERACTION WITH PBX1</scope>
</reference>
<reference key="6">
    <citation type="journal article" date="1998" name="J. Biol. Chem.">
        <title>Members of the Meis1 and Pbx homeodomain protein families cooperatively bind a cAMP-responsive sequence (CRS1) from bovine CYP17.</title>
        <authorList>
            <person name="Bischof L.J."/>
            <person name="Kagawa N."/>
            <person name="Moskow J.J."/>
            <person name="Takahashi Y."/>
            <person name="Iwamatsu A."/>
            <person name="Buchberg A.M."/>
            <person name="Waterman M.R."/>
        </authorList>
    </citation>
    <scope>INTERACTION WITH PBX1</scope>
    <scope>MUTAGENESIS OF TRP-213</scope>
</reference>
<reference key="7">
    <citation type="journal article" date="1999" name="Mol. Cell. Biol.">
        <title>HOXA9 forms triple complexes with PBX2 and MEIS1 in myeloid cells.</title>
        <authorList>
            <person name="Shen W.-F."/>
            <person name="Rozenfeld S."/>
            <person name="Kwong A."/>
            <person name="Koemueves L.G."/>
            <person name="Lawrence H.J."/>
            <person name="Largman C."/>
        </authorList>
    </citation>
    <scope>INTERACTION WITH HOXA9; PBX1 AND PBX2</scope>
    <scope>SUBCELLULAR LOCATION</scope>
</reference>
<reference key="8">
    <citation type="journal article" date="1999" name="Mol. Cell. Biol.">
        <title>PBX and MEIS as non-DNA-binding partners in trimeric complexes with HOX proteins.</title>
        <authorList>
            <person name="Shanmugam K."/>
            <person name="Green N.C."/>
            <person name="Rambaldi I."/>
            <person name="Saragovi H.U."/>
            <person name="Featherstone M.S."/>
        </authorList>
    </citation>
    <scope>INTERACTION WITH PBX1; HOXD4; HOXD9 AND HOXD10</scope>
    <scope>MUTAGENESIS OF ASN-321</scope>
</reference>
<reference key="9">
    <citation type="journal article" date="2002" name="Genes Dev.">
        <title>Meis homeoproteins directly regulate Pax6 during vertebrate lens morphogenesis.</title>
        <authorList>
            <person name="Zhang X."/>
            <person name="Friedman A."/>
            <person name="Heaney S."/>
            <person name="Purcell P."/>
            <person name="Maas R.L."/>
        </authorList>
    </citation>
    <scope>FUNCTION</scope>
</reference>
<reference key="10">
    <citation type="journal article" date="2005" name="Dev. Biol.">
        <title>The homeodomain protein Meis1 is essential for definitive hematopoiesis and vascular patterning in the mouse embryo.</title>
        <authorList>
            <person name="Azcoitia V."/>
            <person name="Aracil M."/>
            <person name="Martinez-A C."/>
            <person name="Torres M."/>
        </authorList>
    </citation>
    <scope>FUNCTION</scope>
    <scope>SUBCELLULAR LOCATION</scope>
    <scope>DISRUPTION PHENOTYPE</scope>
</reference>
<reference key="11">
    <citation type="journal article" date="2005" name="J. Biol. Chem.">
        <title>MEIS C termini harbor transcriptional activation domains that respond to cell signaling.</title>
        <authorList>
            <person name="Huang H."/>
            <person name="Rastegar M."/>
            <person name="Bodner C."/>
            <person name="Goh S.-L."/>
            <person name="Rambaldi I."/>
            <person name="Featherstone M."/>
        </authorList>
    </citation>
    <scope>TRANSCRIPTIONAL ACTIVATION DOMAIN</scope>
</reference>
<reference key="12">
    <citation type="journal article" date="2010" name="Cell">
        <title>A tissue-specific atlas of mouse protein phosphorylation and expression.</title>
        <authorList>
            <person name="Huttlin E.L."/>
            <person name="Jedrychowski M.P."/>
            <person name="Elias J.E."/>
            <person name="Goswami T."/>
            <person name="Rad R."/>
            <person name="Beausoleil S.A."/>
            <person name="Villen J."/>
            <person name="Haas W."/>
            <person name="Sowa M.E."/>
            <person name="Gygi S.P."/>
        </authorList>
    </citation>
    <scope>IDENTIFICATION BY MASS SPECTROMETRY [LARGE SCALE ANALYSIS]</scope>
    <source>
        <tissue>Pancreas</tissue>
    </source>
</reference>
<reference key="13">
    <citation type="journal article" date="2010" name="Proc. Natl. Acad. Sci. U.S.A.">
        <title>Three-amino-acid-loop-extension homeodomain factor Meis3 regulates cell survival via PDK1.</title>
        <authorList>
            <person name="Liu J."/>
            <person name="Wang Y."/>
            <person name="Birnbaum M.J."/>
            <person name="Stoffers D.A."/>
        </authorList>
    </citation>
    <scope>TISSUE SPECIFICITY</scope>
</reference>
<feature type="chain" id="PRO_0000049106" description="Homeobox protein Meis1">
    <location>
        <begin position="1"/>
        <end position="390"/>
    </location>
</feature>
<feature type="domain" description="MEIS N-terminal" evidence="2">
    <location>
        <begin position="108"/>
        <end position="192"/>
    </location>
</feature>
<feature type="DNA-binding region" description="Homeobox; TALE-type" evidence="3">
    <location>
        <begin position="272"/>
        <end position="334"/>
    </location>
</feature>
<feature type="region of interest" description="Disordered" evidence="4">
    <location>
        <begin position="190"/>
        <end position="279"/>
    </location>
</feature>
<feature type="region of interest" description="Interaction with DNA" evidence="1">
    <location>
        <begin position="299"/>
        <end position="329"/>
    </location>
</feature>
<feature type="region of interest" description="Required for transcriptional activation">
    <location>
        <begin position="335"/>
        <end position="390"/>
    </location>
</feature>
<feature type="compositionally biased region" description="Basic and acidic residues" evidence="4">
    <location>
        <begin position="190"/>
        <end position="202"/>
    </location>
</feature>
<feature type="compositionally biased region" description="Polar residues" evidence="4">
    <location>
        <begin position="203"/>
        <end position="213"/>
    </location>
</feature>
<feature type="splice variant" id="VSP_017056" description="In isoform 3." evidence="13 14">
    <original>VSQGTPYNPDGQPMGGFVMDGQQHMGIRAPGPMSGMGMNMGMEGQWHYM</original>
    <variation>GKSPLVTVFKSGKRKASSSHSPGGLLPGK</variation>
    <location>
        <begin position="342"/>
        <end position="390"/>
    </location>
</feature>
<feature type="splice variant" id="VSP_002240" description="In isoform 2." evidence="15">
    <original>PMSGMGMNMGMEGQWHYM</original>
    <variation>LQSMPGEYVARGGPMGVSMGQPSYTQAQMPPHPAQLRHGPPMHTYIPGHPHHPAVMMHGGQPHPGMPMSASSPSVLNTGDPTMSAQVMDIHAQ</variation>
    <location>
        <begin position="373"/>
        <end position="390"/>
    </location>
</feature>
<feature type="mutagenesis site" description="No effect on cooperative binding with PBX1 to CYP17." evidence="12">
    <original>W</original>
    <variation>A</variation>
    <location>
        <position position="213"/>
    </location>
</feature>
<feature type="mutagenesis site" description="Loss of binding to other proteins." evidence="6">
    <original>N</original>
    <variation>S</variation>
    <location>
        <position position="321"/>
    </location>
</feature>
<feature type="helix" evidence="17">
    <location>
        <begin position="280"/>
        <end position="293"/>
    </location>
</feature>
<feature type="turn" evidence="17">
    <location>
        <begin position="294"/>
        <end position="296"/>
    </location>
</feature>
<feature type="helix" evidence="17">
    <location>
        <begin position="302"/>
        <end position="312"/>
    </location>
</feature>
<feature type="helix" evidence="17">
    <location>
        <begin position="316"/>
        <end position="331"/>
    </location>
</feature>
<dbReference type="EMBL" id="U33629">
    <property type="protein sequence ID" value="AAA85508.1"/>
    <property type="molecule type" value="mRNA"/>
</dbReference>
<dbReference type="EMBL" id="U33630">
    <property type="protein sequence ID" value="AAA85509.1"/>
    <property type="molecule type" value="mRNA"/>
</dbReference>
<dbReference type="EMBL" id="AK132298">
    <property type="protein sequence ID" value="BAE21088.1"/>
    <property type="molecule type" value="mRNA"/>
</dbReference>
<dbReference type="EMBL" id="AK140748">
    <property type="protein sequence ID" value="BAE24465.1"/>
    <property type="molecule type" value="mRNA"/>
</dbReference>
<dbReference type="EMBL" id="AL603984">
    <property type="status" value="NOT_ANNOTATED_CDS"/>
    <property type="molecule type" value="Genomic_DNA"/>
</dbReference>
<dbReference type="EMBL" id="AL645570">
    <property type="status" value="NOT_ANNOTATED_CDS"/>
    <property type="molecule type" value="Genomic_DNA"/>
</dbReference>
<dbReference type="EMBL" id="BC023689">
    <property type="protein sequence ID" value="AAH23689.1"/>
    <property type="molecule type" value="mRNA"/>
</dbReference>
<dbReference type="CCDS" id="CCDS24453.1">
    <molecule id="Q60954-2"/>
</dbReference>
<dbReference type="CCDS" id="CCDS56760.1">
    <molecule id="Q60954-1"/>
</dbReference>
<dbReference type="RefSeq" id="NP_001180200.1">
    <molecule id="Q60954-1"/>
    <property type="nucleotide sequence ID" value="NM_001193271.1"/>
</dbReference>
<dbReference type="RefSeq" id="NP_034919.1">
    <molecule id="Q60954-2"/>
    <property type="nucleotide sequence ID" value="NM_010789.3"/>
</dbReference>
<dbReference type="PDB" id="8VTS">
    <property type="method" value="X-ray"/>
    <property type="resolution" value="1.91 A"/>
    <property type="chains" value="A/B/C/D/E/F/G/H=277-341"/>
</dbReference>
<dbReference type="PDB" id="8VTT">
    <property type="method" value="X-ray"/>
    <property type="resolution" value="2.45 A"/>
    <property type="chains" value="A/B/C/D/E/F/G/H=277-341"/>
</dbReference>
<dbReference type="PDBsum" id="8VTS"/>
<dbReference type="PDBsum" id="8VTT"/>
<dbReference type="SMR" id="Q60954"/>
<dbReference type="BioGRID" id="201386">
    <property type="interactions" value="13"/>
</dbReference>
<dbReference type="CORUM" id="Q60954"/>
<dbReference type="FunCoup" id="Q60954">
    <property type="interactions" value="1554"/>
</dbReference>
<dbReference type="IntAct" id="Q60954">
    <property type="interactions" value="17"/>
</dbReference>
<dbReference type="MINT" id="Q60954"/>
<dbReference type="STRING" id="10090.ENSMUSP00000139219"/>
<dbReference type="GlyGen" id="Q60954">
    <property type="glycosylation" value="1 site"/>
</dbReference>
<dbReference type="iPTMnet" id="Q60954"/>
<dbReference type="PhosphoSitePlus" id="Q60954"/>
<dbReference type="PaxDb" id="10090-ENSMUSP00000139219"/>
<dbReference type="ProteomicsDB" id="295876">
    <molecule id="Q60954-1"/>
</dbReference>
<dbReference type="ProteomicsDB" id="295877">
    <molecule id="Q60954-2"/>
</dbReference>
<dbReference type="ProteomicsDB" id="295878">
    <molecule id="Q60954-3"/>
</dbReference>
<dbReference type="Pumba" id="Q60954"/>
<dbReference type="Antibodypedia" id="3157">
    <property type="antibodies" value="318 antibodies from 40 providers"/>
</dbReference>
<dbReference type="DNASU" id="17268"/>
<dbReference type="Ensembl" id="ENSMUST00000068264.14">
    <molecule id="Q60954-1"/>
    <property type="protein sequence ID" value="ENSMUSP00000069277.8"/>
    <property type="gene ID" value="ENSMUSG00000020160.19"/>
</dbReference>
<dbReference type="Ensembl" id="ENSMUST00000144988.8">
    <molecule id="Q60954-3"/>
    <property type="protein sequence ID" value="ENSMUSP00000134969.2"/>
    <property type="gene ID" value="ENSMUSG00000020160.19"/>
</dbReference>
<dbReference type="Ensembl" id="ENSMUST00000185131.8">
    <molecule id="Q60954-2"/>
    <property type="protein sequence ID" value="ENSMUSP00000139219.2"/>
    <property type="gene ID" value="ENSMUSG00000020160.19"/>
</dbReference>
<dbReference type="GeneID" id="17268"/>
<dbReference type="KEGG" id="mmu:17268"/>
<dbReference type="UCSC" id="uc007icl.2">
    <molecule id="Q60954-2"/>
    <property type="organism name" value="mouse"/>
</dbReference>
<dbReference type="UCSC" id="uc007icm.2">
    <molecule id="Q60954-1"/>
    <property type="organism name" value="mouse"/>
</dbReference>
<dbReference type="UCSC" id="uc007icn.2">
    <molecule id="Q60954-3"/>
    <property type="organism name" value="mouse"/>
</dbReference>
<dbReference type="AGR" id="MGI:104717"/>
<dbReference type="CTD" id="4211"/>
<dbReference type="MGI" id="MGI:104717">
    <property type="gene designation" value="Meis1"/>
</dbReference>
<dbReference type="VEuPathDB" id="HostDB:ENSMUSG00000020160"/>
<dbReference type="eggNOG" id="KOG0773">
    <property type="taxonomic scope" value="Eukaryota"/>
</dbReference>
<dbReference type="GeneTree" id="ENSGT00940000156327"/>
<dbReference type="InParanoid" id="Q60954"/>
<dbReference type="OMA" id="MSMGQPS"/>
<dbReference type="OrthoDB" id="45293at9989"/>
<dbReference type="PhylomeDB" id="Q60954"/>
<dbReference type="TreeFam" id="TF318093"/>
<dbReference type="BioGRID-ORCS" id="17268">
    <property type="hits" value="2 hits in 78 CRISPR screens"/>
</dbReference>
<dbReference type="ChiTaRS" id="Meis1">
    <property type="organism name" value="mouse"/>
</dbReference>
<dbReference type="PRO" id="PR:Q60954"/>
<dbReference type="Proteomes" id="UP000000589">
    <property type="component" value="Chromosome 11"/>
</dbReference>
<dbReference type="RNAct" id="Q60954">
    <property type="molecule type" value="protein"/>
</dbReference>
<dbReference type="Bgee" id="ENSMUSG00000020160">
    <property type="expression patterns" value="Expressed in ureter smooth muscle and 263 other cell types or tissues"/>
</dbReference>
<dbReference type="ExpressionAtlas" id="Q60954">
    <property type="expression patterns" value="baseline and differential"/>
</dbReference>
<dbReference type="GO" id="GO:0005654">
    <property type="term" value="C:nucleoplasm"/>
    <property type="evidence" value="ECO:0000304"/>
    <property type="project" value="Reactome"/>
</dbReference>
<dbReference type="GO" id="GO:0005634">
    <property type="term" value="C:nucleus"/>
    <property type="evidence" value="ECO:0000314"/>
    <property type="project" value="MGI"/>
</dbReference>
<dbReference type="GO" id="GO:0005667">
    <property type="term" value="C:transcription regulator complex"/>
    <property type="evidence" value="ECO:0000314"/>
    <property type="project" value="MGI"/>
</dbReference>
<dbReference type="GO" id="GO:0003682">
    <property type="term" value="F:chromatin binding"/>
    <property type="evidence" value="ECO:0000314"/>
    <property type="project" value="MGI"/>
</dbReference>
<dbReference type="GO" id="GO:0003677">
    <property type="term" value="F:DNA binding"/>
    <property type="evidence" value="ECO:0000314"/>
    <property type="project" value="MGI"/>
</dbReference>
<dbReference type="GO" id="GO:0001228">
    <property type="term" value="F:DNA-binding transcription activator activity, RNA polymerase II-specific"/>
    <property type="evidence" value="ECO:0000314"/>
    <property type="project" value="NTNU_SB"/>
</dbReference>
<dbReference type="GO" id="GO:0000981">
    <property type="term" value="F:DNA-binding transcription factor activity, RNA polymerase II-specific"/>
    <property type="evidence" value="ECO:0000314"/>
    <property type="project" value="MGI"/>
</dbReference>
<dbReference type="GO" id="GO:0000978">
    <property type="term" value="F:RNA polymerase II cis-regulatory region sequence-specific DNA binding"/>
    <property type="evidence" value="ECO:0000314"/>
    <property type="project" value="NTNU_SB"/>
</dbReference>
<dbReference type="GO" id="GO:0043565">
    <property type="term" value="F:sequence-specific DNA binding"/>
    <property type="evidence" value="ECO:0000314"/>
    <property type="project" value="MGI"/>
</dbReference>
<dbReference type="GO" id="GO:0001525">
    <property type="term" value="P:angiogenesis"/>
    <property type="evidence" value="ECO:0000315"/>
    <property type="project" value="MGI"/>
</dbReference>
<dbReference type="GO" id="GO:0048514">
    <property type="term" value="P:blood vessel morphogenesis"/>
    <property type="evidence" value="ECO:0000315"/>
    <property type="project" value="MGI"/>
</dbReference>
<dbReference type="GO" id="GO:0061049">
    <property type="term" value="P:cell growth involved in cardiac muscle cell development"/>
    <property type="evidence" value="ECO:0007669"/>
    <property type="project" value="Ensembl"/>
</dbReference>
<dbReference type="GO" id="GO:0060216">
    <property type="term" value="P:definitive hemopoiesis"/>
    <property type="evidence" value="ECO:0000315"/>
    <property type="project" value="MGI"/>
</dbReference>
<dbReference type="GO" id="GO:0030097">
    <property type="term" value="P:hemopoiesis"/>
    <property type="evidence" value="ECO:0000315"/>
    <property type="project" value="MGI"/>
</dbReference>
<dbReference type="GO" id="GO:0002089">
    <property type="term" value="P:lens morphogenesis in camera-type eye"/>
    <property type="evidence" value="ECO:0000315"/>
    <property type="project" value="MGI"/>
</dbReference>
<dbReference type="GO" id="GO:0007626">
    <property type="term" value="P:locomotory behavior"/>
    <property type="evidence" value="ECO:0000315"/>
    <property type="project" value="MGI"/>
</dbReference>
<dbReference type="GO" id="GO:0035855">
    <property type="term" value="P:megakaryocyte development"/>
    <property type="evidence" value="ECO:0000315"/>
    <property type="project" value="MGI"/>
</dbReference>
<dbReference type="GO" id="GO:0045638">
    <property type="term" value="P:negative regulation of myeloid cell differentiation"/>
    <property type="evidence" value="ECO:0000314"/>
    <property type="project" value="UniProtKB"/>
</dbReference>
<dbReference type="GO" id="GO:0045665">
    <property type="term" value="P:negative regulation of neuron differentiation"/>
    <property type="evidence" value="ECO:0000316"/>
    <property type="project" value="MGI"/>
</dbReference>
<dbReference type="GO" id="GO:0045944">
    <property type="term" value="P:positive regulation of transcription by RNA polymerase II"/>
    <property type="evidence" value="ECO:0000314"/>
    <property type="project" value="NTNU_SB"/>
</dbReference>
<dbReference type="GO" id="GO:0006355">
    <property type="term" value="P:regulation of DNA-templated transcription"/>
    <property type="evidence" value="ECO:0000314"/>
    <property type="project" value="MGI"/>
</dbReference>
<dbReference type="GO" id="GO:0006357">
    <property type="term" value="P:regulation of transcription by RNA polymerase II"/>
    <property type="evidence" value="ECO:0000305"/>
    <property type="project" value="MGI"/>
</dbReference>
<dbReference type="CDD" id="cd00086">
    <property type="entry name" value="homeodomain"/>
    <property type="match status" value="1"/>
</dbReference>
<dbReference type="FunFam" id="1.10.10.60:FF:000004">
    <property type="entry name" value="Meis2 homeobox isoform 2c"/>
    <property type="match status" value="1"/>
</dbReference>
<dbReference type="Gene3D" id="1.10.10.60">
    <property type="entry name" value="Homeodomain-like"/>
    <property type="match status" value="1"/>
</dbReference>
<dbReference type="InterPro" id="IPR001356">
    <property type="entry name" value="HD"/>
</dbReference>
<dbReference type="InterPro" id="IPR009057">
    <property type="entry name" value="Homeodomain-like_sf"/>
</dbReference>
<dbReference type="InterPro" id="IPR008422">
    <property type="entry name" value="KN_HD"/>
</dbReference>
<dbReference type="InterPro" id="IPR032453">
    <property type="entry name" value="PKNOX/Meis_N"/>
</dbReference>
<dbReference type="InterPro" id="IPR050224">
    <property type="entry name" value="TALE_homeobox"/>
</dbReference>
<dbReference type="PANTHER" id="PTHR11850">
    <property type="entry name" value="HOMEOBOX PROTEIN TRANSCRIPTION FACTORS"/>
    <property type="match status" value="1"/>
</dbReference>
<dbReference type="Pfam" id="PF05920">
    <property type="entry name" value="Homeobox_KN"/>
    <property type="match status" value="1"/>
</dbReference>
<dbReference type="Pfam" id="PF16493">
    <property type="entry name" value="Meis_PKNOX_N"/>
    <property type="match status" value="1"/>
</dbReference>
<dbReference type="SMART" id="SM00389">
    <property type="entry name" value="HOX"/>
    <property type="match status" value="1"/>
</dbReference>
<dbReference type="SUPFAM" id="SSF46689">
    <property type="entry name" value="Homeodomain-like"/>
    <property type="match status" value="1"/>
</dbReference>
<dbReference type="PROSITE" id="PS50071">
    <property type="entry name" value="HOMEOBOX_2"/>
    <property type="match status" value="1"/>
</dbReference>
<keyword id="KW-0002">3D-structure</keyword>
<keyword id="KW-0010">Activator</keyword>
<keyword id="KW-0025">Alternative splicing</keyword>
<keyword id="KW-0217">Developmental protein</keyword>
<keyword id="KW-0238">DNA-binding</keyword>
<keyword id="KW-0371">Homeobox</keyword>
<keyword id="KW-0539">Nucleus</keyword>
<keyword id="KW-0656">Proto-oncogene</keyword>
<keyword id="KW-1185">Reference proteome</keyword>
<keyword id="KW-0804">Transcription</keyword>
<sequence>MAQRYDDLPHYGGMDGVGIPSTMYGDPHAARSMQPVHHLNHGPPLHSHQYPHTAHTNAMAPSMGSSVNDALKRDKDAIYGHPLFPLLALIFEKCELATCTPREPGVAGGDVCSSESFNEDIAVFAKQIRAEKPLFSSNPELDNLMIQAIQVLRFHLLELEKVHELCDNFCHRYISCLKGKMPIDLVIDDREGGSKSDSEDVTRSANLTDQPSWNRDHDDTASTRSGGTPGPSSGGHTSHSGDNSSEQGDGLDNSVASPSTGDDDDPDKDKKRHKKRGIFPKVATNIMRAWLFQHLTHPYPSEEQKKQLAQDTGLTILQVNNWFINARRRIVQPMIDQSNRAVSQGTPYNPDGQPMGGFVMDGQQHMGIRAPGPMSGMGMNMGMEGQWHYM</sequence>